<keyword id="KW-0687">Ribonucleoprotein</keyword>
<keyword id="KW-0689">Ribosomal protein</keyword>
<keyword id="KW-0694">RNA-binding</keyword>
<keyword id="KW-0699">rRNA-binding</keyword>
<sequence>MAIRKYKPTTPGRRGSSVSDFAEITRSTPEKSLVRPLHGRGGRNAHGRITTRHKGGGHKRAYRLIDFRRNDKDGVPAKVAHIEYDPNRTARIALLHYADGEKRYIIAPKGLFQGAPVESGAGADIKPGNNLPLRNIPTGTTIHAVELRPGGGAKMARSAGSSIQLLGKEGTYATLRMPSGEIRRVDVRCRASIGEVGNAEQSNINWGKAGRMRWKGKRPTVRGVVMNPVDHPHGGGEGKTSGGRHPVSPWGKPEGRTRKNKASDKLIVRRRRTGKNKR</sequence>
<name>RL2_RHOOB</name>
<comment type="function">
    <text evidence="1">One of the primary rRNA binding proteins. Required for association of the 30S and 50S subunits to form the 70S ribosome, for tRNA binding and peptide bond formation. It has been suggested to have peptidyltransferase activity; this is somewhat controversial. Makes several contacts with the 16S rRNA in the 70S ribosome.</text>
</comment>
<comment type="subunit">
    <text evidence="1">Part of the 50S ribosomal subunit. Forms a bridge to the 30S subunit in the 70S ribosome.</text>
</comment>
<comment type="similarity">
    <text evidence="1">Belongs to the universal ribosomal protein uL2 family.</text>
</comment>
<proteinExistence type="inferred from homology"/>
<accession>C1B015</accession>
<protein>
    <recommendedName>
        <fullName evidence="1">Large ribosomal subunit protein uL2</fullName>
    </recommendedName>
    <alternativeName>
        <fullName evidence="3">50S ribosomal protein L2</fullName>
    </alternativeName>
</protein>
<organism>
    <name type="scientific">Rhodococcus opacus (strain B4)</name>
    <dbReference type="NCBI Taxonomy" id="632772"/>
    <lineage>
        <taxon>Bacteria</taxon>
        <taxon>Bacillati</taxon>
        <taxon>Actinomycetota</taxon>
        <taxon>Actinomycetes</taxon>
        <taxon>Mycobacteriales</taxon>
        <taxon>Nocardiaceae</taxon>
        <taxon>Rhodococcus</taxon>
    </lineage>
</organism>
<dbReference type="EMBL" id="AP011115">
    <property type="protein sequence ID" value="BAH54436.1"/>
    <property type="molecule type" value="Genomic_DNA"/>
</dbReference>
<dbReference type="RefSeq" id="WP_015889918.1">
    <property type="nucleotide sequence ID" value="NC_012522.1"/>
</dbReference>
<dbReference type="SMR" id="C1B015"/>
<dbReference type="STRING" id="632772.ROP_61890"/>
<dbReference type="KEGG" id="rop:ROP_61890"/>
<dbReference type="PATRIC" id="fig|632772.20.peg.6465"/>
<dbReference type="HOGENOM" id="CLU_036235_2_1_11"/>
<dbReference type="OrthoDB" id="9778722at2"/>
<dbReference type="Proteomes" id="UP000002212">
    <property type="component" value="Chromosome"/>
</dbReference>
<dbReference type="GO" id="GO:0015934">
    <property type="term" value="C:large ribosomal subunit"/>
    <property type="evidence" value="ECO:0007669"/>
    <property type="project" value="InterPro"/>
</dbReference>
<dbReference type="GO" id="GO:0019843">
    <property type="term" value="F:rRNA binding"/>
    <property type="evidence" value="ECO:0007669"/>
    <property type="project" value="UniProtKB-UniRule"/>
</dbReference>
<dbReference type="GO" id="GO:0003735">
    <property type="term" value="F:structural constituent of ribosome"/>
    <property type="evidence" value="ECO:0007669"/>
    <property type="project" value="InterPro"/>
</dbReference>
<dbReference type="GO" id="GO:0016740">
    <property type="term" value="F:transferase activity"/>
    <property type="evidence" value="ECO:0007669"/>
    <property type="project" value="InterPro"/>
</dbReference>
<dbReference type="GO" id="GO:0002181">
    <property type="term" value="P:cytoplasmic translation"/>
    <property type="evidence" value="ECO:0007669"/>
    <property type="project" value="TreeGrafter"/>
</dbReference>
<dbReference type="FunFam" id="2.30.30.30:FF:000001">
    <property type="entry name" value="50S ribosomal protein L2"/>
    <property type="match status" value="1"/>
</dbReference>
<dbReference type="FunFam" id="2.40.50.140:FF:000003">
    <property type="entry name" value="50S ribosomal protein L2"/>
    <property type="match status" value="1"/>
</dbReference>
<dbReference type="FunFam" id="4.10.950.10:FF:000001">
    <property type="entry name" value="50S ribosomal protein L2"/>
    <property type="match status" value="1"/>
</dbReference>
<dbReference type="Gene3D" id="2.30.30.30">
    <property type="match status" value="1"/>
</dbReference>
<dbReference type="Gene3D" id="2.40.50.140">
    <property type="entry name" value="Nucleic acid-binding proteins"/>
    <property type="match status" value="1"/>
</dbReference>
<dbReference type="Gene3D" id="4.10.950.10">
    <property type="entry name" value="Ribosomal protein L2, domain 3"/>
    <property type="match status" value="1"/>
</dbReference>
<dbReference type="HAMAP" id="MF_01320_B">
    <property type="entry name" value="Ribosomal_uL2_B"/>
    <property type="match status" value="1"/>
</dbReference>
<dbReference type="InterPro" id="IPR012340">
    <property type="entry name" value="NA-bd_OB-fold"/>
</dbReference>
<dbReference type="InterPro" id="IPR014722">
    <property type="entry name" value="Rib_uL2_dom2"/>
</dbReference>
<dbReference type="InterPro" id="IPR002171">
    <property type="entry name" value="Ribosomal_uL2"/>
</dbReference>
<dbReference type="InterPro" id="IPR005880">
    <property type="entry name" value="Ribosomal_uL2_bac/org-type"/>
</dbReference>
<dbReference type="InterPro" id="IPR022669">
    <property type="entry name" value="Ribosomal_uL2_C"/>
</dbReference>
<dbReference type="InterPro" id="IPR022671">
    <property type="entry name" value="Ribosomal_uL2_CS"/>
</dbReference>
<dbReference type="InterPro" id="IPR014726">
    <property type="entry name" value="Ribosomal_uL2_dom3"/>
</dbReference>
<dbReference type="InterPro" id="IPR022666">
    <property type="entry name" value="Ribosomal_uL2_RNA-bd_dom"/>
</dbReference>
<dbReference type="InterPro" id="IPR008991">
    <property type="entry name" value="Translation_prot_SH3-like_sf"/>
</dbReference>
<dbReference type="NCBIfam" id="TIGR01171">
    <property type="entry name" value="rplB_bact"/>
    <property type="match status" value="1"/>
</dbReference>
<dbReference type="PANTHER" id="PTHR13691:SF5">
    <property type="entry name" value="LARGE RIBOSOMAL SUBUNIT PROTEIN UL2M"/>
    <property type="match status" value="1"/>
</dbReference>
<dbReference type="PANTHER" id="PTHR13691">
    <property type="entry name" value="RIBOSOMAL PROTEIN L2"/>
    <property type="match status" value="1"/>
</dbReference>
<dbReference type="Pfam" id="PF00181">
    <property type="entry name" value="Ribosomal_L2"/>
    <property type="match status" value="1"/>
</dbReference>
<dbReference type="Pfam" id="PF03947">
    <property type="entry name" value="Ribosomal_L2_C"/>
    <property type="match status" value="1"/>
</dbReference>
<dbReference type="PIRSF" id="PIRSF002158">
    <property type="entry name" value="Ribosomal_L2"/>
    <property type="match status" value="1"/>
</dbReference>
<dbReference type="SMART" id="SM01383">
    <property type="entry name" value="Ribosomal_L2"/>
    <property type="match status" value="1"/>
</dbReference>
<dbReference type="SMART" id="SM01382">
    <property type="entry name" value="Ribosomal_L2_C"/>
    <property type="match status" value="1"/>
</dbReference>
<dbReference type="SUPFAM" id="SSF50249">
    <property type="entry name" value="Nucleic acid-binding proteins"/>
    <property type="match status" value="1"/>
</dbReference>
<dbReference type="SUPFAM" id="SSF50104">
    <property type="entry name" value="Translation proteins SH3-like domain"/>
    <property type="match status" value="1"/>
</dbReference>
<dbReference type="PROSITE" id="PS00467">
    <property type="entry name" value="RIBOSOMAL_L2"/>
    <property type="match status" value="1"/>
</dbReference>
<gene>
    <name evidence="1" type="primary">rplB</name>
    <name type="ordered locus">ROP_61890</name>
</gene>
<reference key="1">
    <citation type="submission" date="2009-03" db="EMBL/GenBank/DDBJ databases">
        <title>Comparison of the complete genome sequences of Rhodococcus erythropolis PR4 and Rhodococcus opacus B4.</title>
        <authorList>
            <person name="Takarada H."/>
            <person name="Sekine M."/>
            <person name="Hosoyama A."/>
            <person name="Yamada R."/>
            <person name="Fujisawa T."/>
            <person name="Omata S."/>
            <person name="Shimizu A."/>
            <person name="Tsukatani N."/>
            <person name="Tanikawa S."/>
            <person name="Fujita N."/>
            <person name="Harayama S."/>
        </authorList>
    </citation>
    <scope>NUCLEOTIDE SEQUENCE [LARGE SCALE GENOMIC DNA]</scope>
    <source>
        <strain>B4</strain>
    </source>
</reference>
<feature type="chain" id="PRO_1000165765" description="Large ribosomal subunit protein uL2">
    <location>
        <begin position="1"/>
        <end position="278"/>
    </location>
</feature>
<feature type="region of interest" description="Disordered" evidence="2">
    <location>
        <begin position="1"/>
        <end position="58"/>
    </location>
</feature>
<feature type="region of interest" description="Disordered" evidence="2">
    <location>
        <begin position="225"/>
        <end position="278"/>
    </location>
</feature>
<feature type="compositionally biased region" description="Basic residues" evidence="2">
    <location>
        <begin position="37"/>
        <end position="58"/>
    </location>
</feature>
<feature type="compositionally biased region" description="Basic and acidic residues" evidence="2">
    <location>
        <begin position="253"/>
        <end position="267"/>
    </location>
</feature>
<feature type="compositionally biased region" description="Basic residues" evidence="2">
    <location>
        <begin position="268"/>
        <end position="278"/>
    </location>
</feature>
<evidence type="ECO:0000255" key="1">
    <source>
        <dbReference type="HAMAP-Rule" id="MF_01320"/>
    </source>
</evidence>
<evidence type="ECO:0000256" key="2">
    <source>
        <dbReference type="SAM" id="MobiDB-lite"/>
    </source>
</evidence>
<evidence type="ECO:0000305" key="3"/>